<comment type="function">
    <text evidence="1">Binds as a heterodimer with protein bS6 to the central domain of the 16S rRNA, where it helps stabilize the platform of the 30S subunit.</text>
</comment>
<comment type="subunit">
    <text evidence="1">Part of the 30S ribosomal subunit. Forms a tight heterodimer with protein bS6.</text>
</comment>
<comment type="similarity">
    <text evidence="1">Belongs to the bacterial ribosomal protein bS18 family.</text>
</comment>
<dbReference type="EMBL" id="CP000518">
    <property type="protein sequence ID" value="ABL94642.1"/>
    <property type="molecule type" value="Genomic_DNA"/>
</dbReference>
<dbReference type="SMR" id="A1UP84"/>
<dbReference type="STRING" id="189918.Mkms_5457"/>
<dbReference type="KEGG" id="mkm:Mkms_5457"/>
<dbReference type="HOGENOM" id="CLU_148710_2_2_11"/>
<dbReference type="OrthoDB" id="9812008at2"/>
<dbReference type="GO" id="GO:0022627">
    <property type="term" value="C:cytosolic small ribosomal subunit"/>
    <property type="evidence" value="ECO:0007669"/>
    <property type="project" value="TreeGrafter"/>
</dbReference>
<dbReference type="GO" id="GO:0070181">
    <property type="term" value="F:small ribosomal subunit rRNA binding"/>
    <property type="evidence" value="ECO:0007669"/>
    <property type="project" value="TreeGrafter"/>
</dbReference>
<dbReference type="GO" id="GO:0003735">
    <property type="term" value="F:structural constituent of ribosome"/>
    <property type="evidence" value="ECO:0007669"/>
    <property type="project" value="InterPro"/>
</dbReference>
<dbReference type="GO" id="GO:0006412">
    <property type="term" value="P:translation"/>
    <property type="evidence" value="ECO:0007669"/>
    <property type="project" value="UniProtKB-UniRule"/>
</dbReference>
<dbReference type="FunFam" id="4.10.640.10:FF:000004">
    <property type="entry name" value="30S ribosomal protein S18"/>
    <property type="match status" value="1"/>
</dbReference>
<dbReference type="Gene3D" id="4.10.640.10">
    <property type="entry name" value="Ribosomal protein S18"/>
    <property type="match status" value="1"/>
</dbReference>
<dbReference type="HAMAP" id="MF_00270">
    <property type="entry name" value="Ribosomal_bS18"/>
    <property type="match status" value="1"/>
</dbReference>
<dbReference type="InterPro" id="IPR001648">
    <property type="entry name" value="Ribosomal_bS18"/>
</dbReference>
<dbReference type="InterPro" id="IPR018275">
    <property type="entry name" value="Ribosomal_bS18_CS"/>
</dbReference>
<dbReference type="InterPro" id="IPR036870">
    <property type="entry name" value="Ribosomal_bS18_sf"/>
</dbReference>
<dbReference type="NCBIfam" id="TIGR00165">
    <property type="entry name" value="S18"/>
    <property type="match status" value="1"/>
</dbReference>
<dbReference type="PANTHER" id="PTHR13479">
    <property type="entry name" value="30S RIBOSOMAL PROTEIN S18"/>
    <property type="match status" value="1"/>
</dbReference>
<dbReference type="PANTHER" id="PTHR13479:SF62">
    <property type="entry name" value="SMALL RIBOSOMAL SUBUNIT PROTEIN BS18A"/>
    <property type="match status" value="1"/>
</dbReference>
<dbReference type="Pfam" id="PF01084">
    <property type="entry name" value="Ribosomal_S18"/>
    <property type="match status" value="1"/>
</dbReference>
<dbReference type="PRINTS" id="PR00974">
    <property type="entry name" value="RIBOSOMALS18"/>
</dbReference>
<dbReference type="SUPFAM" id="SSF46911">
    <property type="entry name" value="Ribosomal protein S18"/>
    <property type="match status" value="1"/>
</dbReference>
<dbReference type="PROSITE" id="PS00057">
    <property type="entry name" value="RIBOSOMAL_S18"/>
    <property type="match status" value="1"/>
</dbReference>
<organism>
    <name type="scientific">Mycobacterium sp. (strain KMS)</name>
    <dbReference type="NCBI Taxonomy" id="189918"/>
    <lineage>
        <taxon>Bacteria</taxon>
        <taxon>Bacillati</taxon>
        <taxon>Actinomycetota</taxon>
        <taxon>Actinomycetes</taxon>
        <taxon>Mycobacteriales</taxon>
        <taxon>Mycobacteriaceae</taxon>
        <taxon>Mycobacterium</taxon>
    </lineage>
</organism>
<name>RS18_MYCSK</name>
<accession>A1UP84</accession>
<reference key="1">
    <citation type="submission" date="2006-12" db="EMBL/GenBank/DDBJ databases">
        <title>Complete sequence of chromosome of Mycobacterium sp. KMS.</title>
        <authorList>
            <consortium name="US DOE Joint Genome Institute"/>
            <person name="Copeland A."/>
            <person name="Lucas S."/>
            <person name="Lapidus A."/>
            <person name="Barry K."/>
            <person name="Detter J.C."/>
            <person name="Glavina del Rio T."/>
            <person name="Hammon N."/>
            <person name="Israni S."/>
            <person name="Dalin E."/>
            <person name="Tice H."/>
            <person name="Pitluck S."/>
            <person name="Kiss H."/>
            <person name="Brettin T."/>
            <person name="Bruce D."/>
            <person name="Han C."/>
            <person name="Tapia R."/>
            <person name="Gilna P."/>
            <person name="Schmutz J."/>
            <person name="Larimer F."/>
            <person name="Land M."/>
            <person name="Hauser L."/>
            <person name="Kyrpides N."/>
            <person name="Mikhailova N."/>
            <person name="Miller C.D."/>
            <person name="Richardson P."/>
        </authorList>
    </citation>
    <scope>NUCLEOTIDE SEQUENCE [LARGE SCALE GENOMIC DNA]</scope>
    <source>
        <strain>KMS</strain>
    </source>
</reference>
<sequence>MAKSNKRRPAPEKPVKTRKCVFCSKKGQDIDYKDTALLRTYISERGKIRARRVTGNCVQHQRDIAVAVKNAREVALLPFGSSTR</sequence>
<evidence type="ECO:0000255" key="1">
    <source>
        <dbReference type="HAMAP-Rule" id="MF_00270"/>
    </source>
</evidence>
<evidence type="ECO:0000305" key="2"/>
<keyword id="KW-0687">Ribonucleoprotein</keyword>
<keyword id="KW-0689">Ribosomal protein</keyword>
<keyword id="KW-0694">RNA-binding</keyword>
<keyword id="KW-0699">rRNA-binding</keyword>
<feature type="chain" id="PRO_1000003541" description="Small ribosomal subunit protein bS18">
    <location>
        <begin position="1"/>
        <end position="84"/>
    </location>
</feature>
<gene>
    <name evidence="1" type="primary">rpsR</name>
    <name type="ordered locus">Mkms_5457</name>
</gene>
<protein>
    <recommendedName>
        <fullName evidence="1">Small ribosomal subunit protein bS18</fullName>
    </recommendedName>
    <alternativeName>
        <fullName evidence="2">30S ribosomal protein S18</fullName>
    </alternativeName>
</protein>
<proteinExistence type="inferred from homology"/>